<accession>B4SW27</accession>
<name>YAII_SALNS</name>
<dbReference type="EMBL" id="CP001113">
    <property type="protein sequence ID" value="ACF61515.1"/>
    <property type="molecule type" value="Genomic_DNA"/>
</dbReference>
<dbReference type="RefSeq" id="WP_000158137.1">
    <property type="nucleotide sequence ID" value="NZ_CCMR01000003.1"/>
</dbReference>
<dbReference type="KEGG" id="see:SNSL254_A0430"/>
<dbReference type="HOGENOM" id="CLU_106619_1_0_6"/>
<dbReference type="Proteomes" id="UP000008824">
    <property type="component" value="Chromosome"/>
</dbReference>
<dbReference type="CDD" id="cd18720">
    <property type="entry name" value="PIN_YqxD-like"/>
    <property type="match status" value="1"/>
</dbReference>
<dbReference type="HAMAP" id="MF_00489">
    <property type="entry name" value="UPF0178"/>
    <property type="match status" value="1"/>
</dbReference>
<dbReference type="InterPro" id="IPR003791">
    <property type="entry name" value="UPF0178"/>
</dbReference>
<dbReference type="NCBIfam" id="NF001095">
    <property type="entry name" value="PRK00124.1"/>
    <property type="match status" value="1"/>
</dbReference>
<dbReference type="PANTHER" id="PTHR35146">
    <property type="entry name" value="UPF0178 PROTEIN YAII"/>
    <property type="match status" value="1"/>
</dbReference>
<dbReference type="PANTHER" id="PTHR35146:SF1">
    <property type="entry name" value="UPF0178 PROTEIN YAII"/>
    <property type="match status" value="1"/>
</dbReference>
<dbReference type="Pfam" id="PF02639">
    <property type="entry name" value="DUF188"/>
    <property type="match status" value="1"/>
</dbReference>
<evidence type="ECO:0000255" key="1">
    <source>
        <dbReference type="HAMAP-Rule" id="MF_00489"/>
    </source>
</evidence>
<organism>
    <name type="scientific">Salmonella newport (strain SL254)</name>
    <dbReference type="NCBI Taxonomy" id="423368"/>
    <lineage>
        <taxon>Bacteria</taxon>
        <taxon>Pseudomonadati</taxon>
        <taxon>Pseudomonadota</taxon>
        <taxon>Gammaproteobacteria</taxon>
        <taxon>Enterobacterales</taxon>
        <taxon>Enterobacteriaceae</taxon>
        <taxon>Salmonella</taxon>
    </lineage>
</organism>
<sequence length="151" mass="16945">MTIWVDADACPNVIKEILYRAAERMQLPLILVANQALRVPPSRFIRTLRVAAGFDVADNEIVRQCEAGDLVITADIPLAAEVLEKGAAALNPRGERYSDATIRERLTMRDFMDTLRASGVQTGGPNTLSPRDRQHFAAELDKWWLESQRKK</sequence>
<reference key="1">
    <citation type="journal article" date="2011" name="J. Bacteriol.">
        <title>Comparative genomics of 28 Salmonella enterica isolates: evidence for CRISPR-mediated adaptive sublineage evolution.</title>
        <authorList>
            <person name="Fricke W.F."/>
            <person name="Mammel M.K."/>
            <person name="McDermott P.F."/>
            <person name="Tartera C."/>
            <person name="White D.G."/>
            <person name="Leclerc J.E."/>
            <person name="Ravel J."/>
            <person name="Cebula T.A."/>
        </authorList>
    </citation>
    <scope>NUCLEOTIDE SEQUENCE [LARGE SCALE GENOMIC DNA]</scope>
    <source>
        <strain>SL254</strain>
    </source>
</reference>
<proteinExistence type="inferred from homology"/>
<protein>
    <recommendedName>
        <fullName evidence="1">UPF0178 protein YaiI</fullName>
    </recommendedName>
</protein>
<gene>
    <name evidence="1" type="primary">yaiI</name>
    <name type="ordered locus">SNSL254_A0430</name>
</gene>
<comment type="similarity">
    <text evidence="1">Belongs to the UPF0178 family.</text>
</comment>
<feature type="chain" id="PRO_1000126211" description="UPF0178 protein YaiI">
    <location>
        <begin position="1"/>
        <end position="151"/>
    </location>
</feature>